<proteinExistence type="inferred from homology"/>
<sequence length="183" mass="20226">MIVGLIGVVEKISALEAHIEVQGVVYGVQVSMRTAALLQTGQKARLKILQVIKEDAHLLYGFLEESEKILFERLLKINGVGGRIALAILSSFSPNEFENIIATKEVKRLQQVPGIGKKLADKIMVDLIGFFIQDENRPARNEVFLALESLGFKSAEINPVLKTLKPHLSIEAAIKEALQQLRS</sequence>
<feature type="chain" id="PRO_0000094640" description="Holliday junction branch migration complex subunit RuvA">
    <location>
        <begin position="1"/>
        <end position="183"/>
    </location>
</feature>
<feature type="region of interest" description="Domain I" evidence="1">
    <location>
        <begin position="1"/>
        <end position="63"/>
    </location>
</feature>
<feature type="region of interest" description="Domain II" evidence="1">
    <location>
        <begin position="64"/>
        <end position="139"/>
    </location>
</feature>
<feature type="region of interest" description="Domain III" evidence="1">
    <location>
        <begin position="139"/>
        <end position="183"/>
    </location>
</feature>
<feature type="region of interest" description="Flexible linker" evidence="1">
    <location>
        <position position="139"/>
    </location>
</feature>
<protein>
    <recommendedName>
        <fullName evidence="1">Holliday junction branch migration complex subunit RuvA</fullName>
    </recommendedName>
</protein>
<gene>
    <name evidence="1" type="primary">ruvA</name>
    <name type="ordered locus">jhp_0815</name>
</gene>
<dbReference type="EMBL" id="AE001439">
    <property type="protein sequence ID" value="AAD06396.1"/>
    <property type="molecule type" value="Genomic_DNA"/>
</dbReference>
<dbReference type="PIR" id="A71884">
    <property type="entry name" value="A71884"/>
</dbReference>
<dbReference type="RefSeq" id="WP_000635125.1">
    <property type="nucleotide sequence ID" value="NZ_CP011330.1"/>
</dbReference>
<dbReference type="SMR" id="Q9ZKW9"/>
<dbReference type="KEGG" id="hpj:jhp_0815"/>
<dbReference type="PATRIC" id="fig|85963.30.peg.156"/>
<dbReference type="eggNOG" id="COG0632">
    <property type="taxonomic scope" value="Bacteria"/>
</dbReference>
<dbReference type="Proteomes" id="UP000000804">
    <property type="component" value="Chromosome"/>
</dbReference>
<dbReference type="GO" id="GO:0005737">
    <property type="term" value="C:cytoplasm"/>
    <property type="evidence" value="ECO:0007669"/>
    <property type="project" value="UniProtKB-SubCell"/>
</dbReference>
<dbReference type="GO" id="GO:0009379">
    <property type="term" value="C:Holliday junction helicase complex"/>
    <property type="evidence" value="ECO:0007669"/>
    <property type="project" value="InterPro"/>
</dbReference>
<dbReference type="GO" id="GO:0048476">
    <property type="term" value="C:Holliday junction resolvase complex"/>
    <property type="evidence" value="ECO:0007669"/>
    <property type="project" value="UniProtKB-UniRule"/>
</dbReference>
<dbReference type="GO" id="GO:0005524">
    <property type="term" value="F:ATP binding"/>
    <property type="evidence" value="ECO:0007669"/>
    <property type="project" value="InterPro"/>
</dbReference>
<dbReference type="GO" id="GO:0000400">
    <property type="term" value="F:four-way junction DNA binding"/>
    <property type="evidence" value="ECO:0007669"/>
    <property type="project" value="UniProtKB-UniRule"/>
</dbReference>
<dbReference type="GO" id="GO:0009378">
    <property type="term" value="F:four-way junction helicase activity"/>
    <property type="evidence" value="ECO:0007669"/>
    <property type="project" value="InterPro"/>
</dbReference>
<dbReference type="GO" id="GO:0006310">
    <property type="term" value="P:DNA recombination"/>
    <property type="evidence" value="ECO:0007669"/>
    <property type="project" value="UniProtKB-UniRule"/>
</dbReference>
<dbReference type="GO" id="GO:0006281">
    <property type="term" value="P:DNA repair"/>
    <property type="evidence" value="ECO:0007669"/>
    <property type="project" value="UniProtKB-UniRule"/>
</dbReference>
<dbReference type="CDD" id="cd14332">
    <property type="entry name" value="UBA_RuvA_C"/>
    <property type="match status" value="1"/>
</dbReference>
<dbReference type="Gene3D" id="1.10.150.20">
    <property type="entry name" value="5' to 3' exonuclease, C-terminal subdomain"/>
    <property type="match status" value="1"/>
</dbReference>
<dbReference type="Gene3D" id="1.10.8.10">
    <property type="entry name" value="DNA helicase RuvA subunit, C-terminal domain"/>
    <property type="match status" value="1"/>
</dbReference>
<dbReference type="Gene3D" id="2.40.50.140">
    <property type="entry name" value="Nucleic acid-binding proteins"/>
    <property type="match status" value="1"/>
</dbReference>
<dbReference type="HAMAP" id="MF_00031">
    <property type="entry name" value="DNA_HJ_migration_RuvA"/>
    <property type="match status" value="1"/>
</dbReference>
<dbReference type="InterPro" id="IPR013849">
    <property type="entry name" value="DNA_helicase_Holl-junc_RuvA_I"/>
</dbReference>
<dbReference type="InterPro" id="IPR003583">
    <property type="entry name" value="Hlx-hairpin-Hlx_DNA-bd_motif"/>
</dbReference>
<dbReference type="InterPro" id="IPR012340">
    <property type="entry name" value="NA-bd_OB-fold"/>
</dbReference>
<dbReference type="InterPro" id="IPR000085">
    <property type="entry name" value="RuvA"/>
</dbReference>
<dbReference type="InterPro" id="IPR010994">
    <property type="entry name" value="RuvA_2-like"/>
</dbReference>
<dbReference type="InterPro" id="IPR011114">
    <property type="entry name" value="RuvA_C"/>
</dbReference>
<dbReference type="InterPro" id="IPR036267">
    <property type="entry name" value="RuvA_C_sf"/>
</dbReference>
<dbReference type="NCBIfam" id="TIGR00084">
    <property type="entry name" value="ruvA"/>
    <property type="match status" value="1"/>
</dbReference>
<dbReference type="Pfam" id="PF14520">
    <property type="entry name" value="HHH_5"/>
    <property type="match status" value="1"/>
</dbReference>
<dbReference type="Pfam" id="PF07499">
    <property type="entry name" value="RuvA_C"/>
    <property type="match status" value="1"/>
</dbReference>
<dbReference type="Pfam" id="PF01330">
    <property type="entry name" value="RuvA_N"/>
    <property type="match status" value="1"/>
</dbReference>
<dbReference type="SMART" id="SM00278">
    <property type="entry name" value="HhH1"/>
    <property type="match status" value="2"/>
</dbReference>
<dbReference type="SUPFAM" id="SSF46929">
    <property type="entry name" value="DNA helicase RuvA subunit, C-terminal domain"/>
    <property type="match status" value="1"/>
</dbReference>
<dbReference type="SUPFAM" id="SSF50249">
    <property type="entry name" value="Nucleic acid-binding proteins"/>
    <property type="match status" value="1"/>
</dbReference>
<dbReference type="SUPFAM" id="SSF47781">
    <property type="entry name" value="RuvA domain 2-like"/>
    <property type="match status" value="1"/>
</dbReference>
<keyword id="KW-0963">Cytoplasm</keyword>
<keyword id="KW-0227">DNA damage</keyword>
<keyword id="KW-0233">DNA recombination</keyword>
<keyword id="KW-0234">DNA repair</keyword>
<keyword id="KW-0238">DNA-binding</keyword>
<comment type="function">
    <text evidence="1">The RuvA-RuvB-RuvC complex processes Holliday junction (HJ) DNA during genetic recombination and DNA repair, while the RuvA-RuvB complex plays an important role in the rescue of blocked DNA replication forks via replication fork reversal (RFR). RuvA specifically binds to HJ cruciform DNA, conferring on it an open structure. The RuvB hexamer acts as an ATP-dependent pump, pulling dsDNA into and through the RuvAB complex. HJ branch migration allows RuvC to scan DNA until it finds its consensus sequence, where it cleaves and resolves the cruciform DNA.</text>
</comment>
<comment type="subunit">
    <text evidence="1">Homotetramer. Forms an RuvA(8)-RuvB(12)-Holliday junction (HJ) complex. HJ DNA is sandwiched between 2 RuvA tetramers; dsDNA enters through RuvA and exits via RuvB. An RuvB hexamer assembles on each DNA strand where it exits the tetramer. Each RuvB hexamer is contacted by two RuvA subunits (via domain III) on 2 adjacent RuvB subunits; this complex drives branch migration. In the full resolvosome a probable DNA-RuvA(4)-RuvB(12)-RuvC(2) complex forms which resolves the HJ.</text>
</comment>
<comment type="subcellular location">
    <subcellularLocation>
        <location evidence="1">Cytoplasm</location>
    </subcellularLocation>
</comment>
<comment type="domain">
    <text evidence="1">Has three domains with a flexible linker between the domains II and III and assumes an 'L' shape. Domain III is highly mobile and contacts RuvB.</text>
</comment>
<comment type="similarity">
    <text evidence="1">Belongs to the RuvA family.</text>
</comment>
<evidence type="ECO:0000255" key="1">
    <source>
        <dbReference type="HAMAP-Rule" id="MF_00031"/>
    </source>
</evidence>
<organism>
    <name type="scientific">Helicobacter pylori (strain J99 / ATCC 700824)</name>
    <name type="common">Campylobacter pylori J99</name>
    <dbReference type="NCBI Taxonomy" id="85963"/>
    <lineage>
        <taxon>Bacteria</taxon>
        <taxon>Pseudomonadati</taxon>
        <taxon>Campylobacterota</taxon>
        <taxon>Epsilonproteobacteria</taxon>
        <taxon>Campylobacterales</taxon>
        <taxon>Helicobacteraceae</taxon>
        <taxon>Helicobacter</taxon>
    </lineage>
</organism>
<name>RUVA_HELPJ</name>
<accession>Q9ZKW9</accession>
<reference key="1">
    <citation type="journal article" date="1999" name="Nature">
        <title>Genomic sequence comparison of two unrelated isolates of the human gastric pathogen Helicobacter pylori.</title>
        <authorList>
            <person name="Alm R.A."/>
            <person name="Ling L.-S.L."/>
            <person name="Moir D.T."/>
            <person name="King B.L."/>
            <person name="Brown E.D."/>
            <person name="Doig P.C."/>
            <person name="Smith D.R."/>
            <person name="Noonan B."/>
            <person name="Guild B.C."/>
            <person name="deJonge B.L."/>
            <person name="Carmel G."/>
            <person name="Tummino P.J."/>
            <person name="Caruso A."/>
            <person name="Uria-Nickelsen M."/>
            <person name="Mills D.M."/>
            <person name="Ives C."/>
            <person name="Gibson R."/>
            <person name="Merberg D."/>
            <person name="Mills S.D."/>
            <person name="Jiang Q."/>
            <person name="Taylor D.E."/>
            <person name="Vovis G.F."/>
            <person name="Trust T.J."/>
        </authorList>
    </citation>
    <scope>NUCLEOTIDE SEQUENCE [LARGE SCALE GENOMIC DNA]</scope>
    <source>
        <strain>J99 / ATCC 700824</strain>
    </source>
</reference>